<protein>
    <recommendedName>
        <fullName>UPF0754 membrane protein CYA_0973</fullName>
    </recommendedName>
</protein>
<organism>
    <name type="scientific">Synechococcus sp. (strain JA-3-3Ab)</name>
    <name type="common">Cyanobacteria bacterium Yellowstone A-Prime</name>
    <dbReference type="NCBI Taxonomy" id="321327"/>
    <lineage>
        <taxon>Bacteria</taxon>
        <taxon>Bacillati</taxon>
        <taxon>Cyanobacteriota</taxon>
        <taxon>Cyanophyceae</taxon>
        <taxon>Synechococcales</taxon>
        <taxon>Synechococcaceae</taxon>
        <taxon>Synechococcus</taxon>
    </lineage>
</organism>
<feature type="chain" id="PRO_0000388327" description="UPF0754 membrane protein CYA_0973">
    <location>
        <begin position="1"/>
        <end position="406"/>
    </location>
</feature>
<feature type="transmembrane region" description="Helical" evidence="2">
    <location>
        <begin position="1"/>
        <end position="21"/>
    </location>
</feature>
<feature type="transmembrane region" description="Helical" evidence="2">
    <location>
        <begin position="385"/>
        <end position="405"/>
    </location>
</feature>
<dbReference type="EMBL" id="CP000239">
    <property type="protein sequence ID" value="ABC99173.1"/>
    <property type="molecule type" value="Genomic_DNA"/>
</dbReference>
<dbReference type="RefSeq" id="WP_011429856.1">
    <property type="nucleotide sequence ID" value="NC_007775.1"/>
</dbReference>
<dbReference type="SMR" id="Q2JVQ8"/>
<dbReference type="STRING" id="321327.CYA_0973"/>
<dbReference type="KEGG" id="cya:CYA_0973"/>
<dbReference type="eggNOG" id="COG4399">
    <property type="taxonomic scope" value="Bacteria"/>
</dbReference>
<dbReference type="HOGENOM" id="CLU_042384_0_1_3"/>
<dbReference type="OrthoDB" id="9787430at2"/>
<dbReference type="Proteomes" id="UP000008818">
    <property type="component" value="Chromosome"/>
</dbReference>
<dbReference type="GO" id="GO:0005886">
    <property type="term" value="C:plasma membrane"/>
    <property type="evidence" value="ECO:0007669"/>
    <property type="project" value="UniProtKB-SubCell"/>
</dbReference>
<dbReference type="InterPro" id="IPR007383">
    <property type="entry name" value="DUF445"/>
</dbReference>
<dbReference type="InterPro" id="IPR016991">
    <property type="entry name" value="UCP032178"/>
</dbReference>
<dbReference type="PANTHER" id="PTHR35791">
    <property type="entry name" value="UPF0754 MEMBRANE PROTEIN YHEB"/>
    <property type="match status" value="1"/>
</dbReference>
<dbReference type="PANTHER" id="PTHR35791:SF1">
    <property type="entry name" value="UPF0754 MEMBRANE PROTEIN YHEB"/>
    <property type="match status" value="1"/>
</dbReference>
<dbReference type="Pfam" id="PF04286">
    <property type="entry name" value="DUF445"/>
    <property type="match status" value="1"/>
</dbReference>
<dbReference type="PIRSF" id="PIRSF032178">
    <property type="entry name" value="UCP032178"/>
    <property type="match status" value="1"/>
</dbReference>
<gene>
    <name type="ordered locus">CYA_0973</name>
</gene>
<evidence type="ECO:0000250" key="1"/>
<evidence type="ECO:0000255" key="2"/>
<evidence type="ECO:0000305" key="3"/>
<sequence>MALWIYVVPPLAGLVIGYFTNDIAIKMLFRPYRAYRIFGWRIPFTPGLIPQNQPRLAKQIAKTIMGSLLTPEELHNLARKLLRTERMQAGIRWLLGVALDRLQNPEQQQQTAQVLARILADLFNESLPRLVKVLARQETFLEGPINQLFDQVLLELRLNAEQARQLSEWILKQALPPKVLRQNLVDFLTDRNIEALDEEFRERATGSYWLVANLFGLKNALLRLRTYCLEEPEGAEAILEDLLKDINAPRRLTEILQNLSLQNLPVSAVRQLRRALRDGIQDYLRSQGPEVIKGLGESIDWEKVASLVLGRLRNSKALIASIDQISADLALILERYLERDLESLMMQVIPVLNLDQVIADKVNATSPAELEQAIQQIVRQELQAIVNLGGLLGFLVGCVQVLFLLR</sequence>
<keyword id="KW-0997">Cell inner membrane</keyword>
<keyword id="KW-1003">Cell membrane</keyword>
<keyword id="KW-0472">Membrane</keyword>
<keyword id="KW-0812">Transmembrane</keyword>
<keyword id="KW-1133">Transmembrane helix</keyword>
<comment type="subcellular location">
    <subcellularLocation>
        <location evidence="1">Cell inner membrane</location>
        <topology evidence="1">Multi-pass membrane protein</topology>
    </subcellularLocation>
</comment>
<comment type="similarity">
    <text evidence="3">Belongs to the UPF0754 family.</text>
</comment>
<proteinExistence type="inferred from homology"/>
<accession>Q2JVQ8</accession>
<reference key="1">
    <citation type="journal article" date="2007" name="ISME J.">
        <title>Population level functional diversity in a microbial community revealed by comparative genomic and metagenomic analyses.</title>
        <authorList>
            <person name="Bhaya D."/>
            <person name="Grossman A.R."/>
            <person name="Steunou A.-S."/>
            <person name="Khuri N."/>
            <person name="Cohan F.M."/>
            <person name="Hamamura N."/>
            <person name="Melendrez M.C."/>
            <person name="Bateson M.M."/>
            <person name="Ward D.M."/>
            <person name="Heidelberg J.F."/>
        </authorList>
    </citation>
    <scope>NUCLEOTIDE SEQUENCE [LARGE SCALE GENOMIC DNA]</scope>
    <source>
        <strain>JA-3-3Ab</strain>
    </source>
</reference>
<name>Y973_SYNJA</name>